<protein>
    <recommendedName>
        <fullName>Protein SinI</fullName>
    </recommendedName>
</protein>
<name>SINI_BACSU</name>
<evidence type="ECO:0000255" key="1">
    <source>
        <dbReference type="PROSITE-ProRule" id="PRU00833"/>
    </source>
</evidence>
<evidence type="ECO:0000269" key="2">
    <source>
    </source>
</evidence>
<evidence type="ECO:0007829" key="3">
    <source>
        <dbReference type="PDB" id="1B0N"/>
    </source>
</evidence>
<reference key="1">
    <citation type="journal article" date="1986" name="J. Bacteriol.">
        <title>Characterization of a cloned Bacillus subtilis gene that inhibits sporulation in multiple copies.</title>
        <authorList>
            <person name="Gaur N.K."/>
            <person name="Dubnau E."/>
            <person name="Smith I."/>
        </authorList>
    </citation>
    <scope>NUCLEOTIDE SEQUENCE [GENOMIC DNA]</scope>
</reference>
<reference key="2">
    <citation type="journal article" date="1996" name="Microbiology">
        <title>Systematic sequencing of the 283 kb 210 degrees-232 degrees region of the Bacillus subtilis genome containing the skin element and many sporulation genes.</title>
        <authorList>
            <person name="Mizuno M."/>
            <person name="Masuda S."/>
            <person name="Takemaru K."/>
            <person name="Hosono S."/>
            <person name="Sato T."/>
            <person name="Takeuchi M."/>
            <person name="Kobayashi Y."/>
        </authorList>
    </citation>
    <scope>NUCLEOTIDE SEQUENCE [GENOMIC DNA]</scope>
    <source>
        <strain>168 / JH642</strain>
    </source>
</reference>
<reference key="3">
    <citation type="journal article" date="1997" name="Nature">
        <title>The complete genome sequence of the Gram-positive bacterium Bacillus subtilis.</title>
        <authorList>
            <person name="Kunst F."/>
            <person name="Ogasawara N."/>
            <person name="Moszer I."/>
            <person name="Albertini A.M."/>
            <person name="Alloni G."/>
            <person name="Azevedo V."/>
            <person name="Bertero M.G."/>
            <person name="Bessieres P."/>
            <person name="Bolotin A."/>
            <person name="Borchert S."/>
            <person name="Borriss R."/>
            <person name="Boursier L."/>
            <person name="Brans A."/>
            <person name="Braun M."/>
            <person name="Brignell S.C."/>
            <person name="Bron S."/>
            <person name="Brouillet S."/>
            <person name="Bruschi C.V."/>
            <person name="Caldwell B."/>
            <person name="Capuano V."/>
            <person name="Carter N.M."/>
            <person name="Choi S.-K."/>
            <person name="Codani J.-J."/>
            <person name="Connerton I.F."/>
            <person name="Cummings N.J."/>
            <person name="Daniel R.A."/>
            <person name="Denizot F."/>
            <person name="Devine K.M."/>
            <person name="Duesterhoeft A."/>
            <person name="Ehrlich S.D."/>
            <person name="Emmerson P.T."/>
            <person name="Entian K.-D."/>
            <person name="Errington J."/>
            <person name="Fabret C."/>
            <person name="Ferrari E."/>
            <person name="Foulger D."/>
            <person name="Fritz C."/>
            <person name="Fujita M."/>
            <person name="Fujita Y."/>
            <person name="Fuma S."/>
            <person name="Galizzi A."/>
            <person name="Galleron N."/>
            <person name="Ghim S.-Y."/>
            <person name="Glaser P."/>
            <person name="Goffeau A."/>
            <person name="Golightly E.J."/>
            <person name="Grandi G."/>
            <person name="Guiseppi G."/>
            <person name="Guy B.J."/>
            <person name="Haga K."/>
            <person name="Haiech J."/>
            <person name="Harwood C.R."/>
            <person name="Henaut A."/>
            <person name="Hilbert H."/>
            <person name="Holsappel S."/>
            <person name="Hosono S."/>
            <person name="Hullo M.-F."/>
            <person name="Itaya M."/>
            <person name="Jones L.-M."/>
            <person name="Joris B."/>
            <person name="Karamata D."/>
            <person name="Kasahara Y."/>
            <person name="Klaerr-Blanchard M."/>
            <person name="Klein C."/>
            <person name="Kobayashi Y."/>
            <person name="Koetter P."/>
            <person name="Koningstein G."/>
            <person name="Krogh S."/>
            <person name="Kumano M."/>
            <person name="Kurita K."/>
            <person name="Lapidus A."/>
            <person name="Lardinois S."/>
            <person name="Lauber J."/>
            <person name="Lazarevic V."/>
            <person name="Lee S.-M."/>
            <person name="Levine A."/>
            <person name="Liu H."/>
            <person name="Masuda S."/>
            <person name="Mauel C."/>
            <person name="Medigue C."/>
            <person name="Medina N."/>
            <person name="Mellado R.P."/>
            <person name="Mizuno M."/>
            <person name="Moestl D."/>
            <person name="Nakai S."/>
            <person name="Noback M."/>
            <person name="Noone D."/>
            <person name="O'Reilly M."/>
            <person name="Ogawa K."/>
            <person name="Ogiwara A."/>
            <person name="Oudega B."/>
            <person name="Park S.-H."/>
            <person name="Parro V."/>
            <person name="Pohl T.M."/>
            <person name="Portetelle D."/>
            <person name="Porwollik S."/>
            <person name="Prescott A.M."/>
            <person name="Presecan E."/>
            <person name="Pujic P."/>
            <person name="Purnelle B."/>
            <person name="Rapoport G."/>
            <person name="Rey M."/>
            <person name="Reynolds S."/>
            <person name="Rieger M."/>
            <person name="Rivolta C."/>
            <person name="Rocha E."/>
            <person name="Roche B."/>
            <person name="Rose M."/>
            <person name="Sadaie Y."/>
            <person name="Sato T."/>
            <person name="Scanlan E."/>
            <person name="Schleich S."/>
            <person name="Schroeter R."/>
            <person name="Scoffone F."/>
            <person name="Sekiguchi J."/>
            <person name="Sekowska A."/>
            <person name="Seror S.J."/>
            <person name="Serror P."/>
            <person name="Shin B.-S."/>
            <person name="Soldo B."/>
            <person name="Sorokin A."/>
            <person name="Tacconi E."/>
            <person name="Takagi T."/>
            <person name="Takahashi H."/>
            <person name="Takemaru K."/>
            <person name="Takeuchi M."/>
            <person name="Tamakoshi A."/>
            <person name="Tanaka T."/>
            <person name="Terpstra P."/>
            <person name="Tognoni A."/>
            <person name="Tosato V."/>
            <person name="Uchiyama S."/>
            <person name="Vandenbol M."/>
            <person name="Vannier F."/>
            <person name="Vassarotti A."/>
            <person name="Viari A."/>
            <person name="Wambutt R."/>
            <person name="Wedler E."/>
            <person name="Wedler H."/>
            <person name="Weitzenegger T."/>
            <person name="Winters P."/>
            <person name="Wipat A."/>
            <person name="Yamamoto H."/>
            <person name="Yamane K."/>
            <person name="Yasumoto K."/>
            <person name="Yata K."/>
            <person name="Yoshida K."/>
            <person name="Yoshikawa H.-F."/>
            <person name="Zumstein E."/>
            <person name="Yoshikawa H."/>
            <person name="Danchin A."/>
        </authorList>
    </citation>
    <scope>NUCLEOTIDE SEQUENCE [LARGE SCALE GENOMIC DNA]</scope>
    <source>
        <strain>168</strain>
    </source>
</reference>
<reference key="4">
    <citation type="journal article" date="1993" name="Genes Dev.">
        <title>SinI modulates the activity of SinR, a developmental switch protein of Bacillus subtilis, by protein-protein interaction.</title>
        <authorList>
            <person name="Bai U."/>
            <person name="Mandic-Mulec I."/>
            <person name="Smith I."/>
        </authorList>
    </citation>
    <scope>PROTEIN SEQUENCE OF 1-20</scope>
    <scope>CHARACTERIZATION</scope>
</reference>
<reference key="5">
    <citation type="journal article" date="1998" name="J. Mol. Biol.">
        <title>An evolutionary link between sporulation and prophage induction in the structure of a repressor:anti-repressor complex.</title>
        <authorList>
            <person name="Lewis R.J."/>
            <person name="Brannigan J.A."/>
            <person name="Offen W.A."/>
            <person name="Smith I."/>
            <person name="Wilkinson A.J."/>
        </authorList>
    </citation>
    <scope>X-RAY CRYSTALLOGRAPHY (1.9 ANGSTROMS) IN COMPLEX WITH SINR</scope>
</reference>
<feature type="chain" id="PRO_0000097763" description="Protein SinI">
    <location>
        <begin position="1"/>
        <end position="57"/>
    </location>
</feature>
<feature type="domain" description="Sin" evidence="1">
    <location>
        <begin position="2"/>
        <end position="40"/>
    </location>
</feature>
<feature type="helix" evidence="3">
    <location>
        <begin position="13"/>
        <end position="24"/>
    </location>
</feature>
<feature type="helix" evidence="3">
    <location>
        <begin position="29"/>
        <end position="38"/>
    </location>
</feature>
<gene>
    <name type="primary">sinI</name>
    <name type="ordered locus">BSU24600</name>
</gene>
<sequence length="57" mass="6602">MKNAKQEHFELDQEWVELMVEAKEANISPEEIRKYLLLNKKSAHPGPAARSHTVNPF</sequence>
<comment type="function">
    <text>Acts as an antagonist to SinR. SinI prevents SinR from binding to its target sequence on the gene for AprE.</text>
</comment>
<comment type="subunit">
    <text evidence="2">Heterodimer with SinR.</text>
</comment>
<keyword id="KW-0002">3D-structure</keyword>
<keyword id="KW-0903">Direct protein sequencing</keyword>
<keyword id="KW-1185">Reference proteome</keyword>
<accession>P23308</accession>
<dbReference type="EMBL" id="M14112">
    <property type="status" value="NOT_ANNOTATED_CDS"/>
    <property type="molecule type" value="Genomic_DNA"/>
</dbReference>
<dbReference type="EMBL" id="D84432">
    <property type="protein sequence ID" value="BAA12543.1"/>
    <property type="molecule type" value="Genomic_DNA"/>
</dbReference>
<dbReference type="EMBL" id="AL009126">
    <property type="protein sequence ID" value="CAB14391.1"/>
    <property type="molecule type" value="Genomic_DNA"/>
</dbReference>
<dbReference type="PIR" id="A25159">
    <property type="entry name" value="A25159"/>
</dbReference>
<dbReference type="RefSeq" id="NP_390340.1">
    <property type="nucleotide sequence ID" value="NC_000964.3"/>
</dbReference>
<dbReference type="RefSeq" id="WP_003230187.1">
    <property type="nucleotide sequence ID" value="NZ_OZ025638.1"/>
</dbReference>
<dbReference type="PDB" id="1B0N">
    <property type="method" value="X-ray"/>
    <property type="resolution" value="1.90 A"/>
    <property type="chains" value="B=1-57"/>
</dbReference>
<dbReference type="PDB" id="5TMX">
    <property type="method" value="NMR"/>
    <property type="chains" value="A/B=1-57"/>
</dbReference>
<dbReference type="PDBsum" id="1B0N"/>
<dbReference type="PDBsum" id="5TMX"/>
<dbReference type="BMRB" id="P23308"/>
<dbReference type="SMR" id="P23308"/>
<dbReference type="DIP" id="DIP-6103N"/>
<dbReference type="FunCoup" id="P23308">
    <property type="interactions" value="9"/>
</dbReference>
<dbReference type="IntAct" id="P23308">
    <property type="interactions" value="1"/>
</dbReference>
<dbReference type="MINT" id="P23308"/>
<dbReference type="STRING" id="224308.BSU24600"/>
<dbReference type="PaxDb" id="224308-BSU24600"/>
<dbReference type="EnsemblBacteria" id="CAB14391">
    <property type="protein sequence ID" value="CAB14391"/>
    <property type="gene ID" value="BSU_24600"/>
</dbReference>
<dbReference type="GeneID" id="938543"/>
<dbReference type="KEGG" id="bsu:BSU24600"/>
<dbReference type="PATRIC" id="fig|224308.179.peg.2678"/>
<dbReference type="eggNOG" id="ENOG5030DBE">
    <property type="taxonomic scope" value="Bacteria"/>
</dbReference>
<dbReference type="InParanoid" id="P23308"/>
<dbReference type="OrthoDB" id="2900727at2"/>
<dbReference type="BioCyc" id="BSUB:BSU24600-MONOMER"/>
<dbReference type="EvolutionaryTrace" id="P23308"/>
<dbReference type="Proteomes" id="UP000001570">
    <property type="component" value="Chromosome"/>
</dbReference>
<dbReference type="GO" id="GO:0046983">
    <property type="term" value="F:protein dimerization activity"/>
    <property type="evidence" value="ECO:0007669"/>
    <property type="project" value="InterPro"/>
</dbReference>
<dbReference type="GO" id="GO:0006355">
    <property type="term" value="P:regulation of DNA-templated transcription"/>
    <property type="evidence" value="ECO:0007669"/>
    <property type="project" value="InterPro"/>
</dbReference>
<dbReference type="InterPro" id="IPR010981">
    <property type="entry name" value="SinR/SinI_dimer_dom"/>
</dbReference>
<dbReference type="InterPro" id="IPR036281">
    <property type="entry name" value="SinR/SinI_dimer_dom_sf"/>
</dbReference>
<dbReference type="NCBIfam" id="NF046031">
    <property type="entry name" value="AntRepSinIBacil"/>
    <property type="match status" value="1"/>
</dbReference>
<dbReference type="Pfam" id="PF08671">
    <property type="entry name" value="SinI"/>
    <property type="match status" value="1"/>
</dbReference>
<dbReference type="SUPFAM" id="SSF47406">
    <property type="entry name" value="SinR repressor dimerisation domain-like"/>
    <property type="match status" value="1"/>
</dbReference>
<dbReference type="PROSITE" id="PS51500">
    <property type="entry name" value="SIN"/>
    <property type="match status" value="1"/>
</dbReference>
<organism>
    <name type="scientific">Bacillus subtilis (strain 168)</name>
    <dbReference type="NCBI Taxonomy" id="224308"/>
    <lineage>
        <taxon>Bacteria</taxon>
        <taxon>Bacillati</taxon>
        <taxon>Bacillota</taxon>
        <taxon>Bacilli</taxon>
        <taxon>Bacillales</taxon>
        <taxon>Bacillaceae</taxon>
        <taxon>Bacillus</taxon>
    </lineage>
</organism>
<proteinExistence type="evidence at protein level"/>